<accession>A8GP33</accession>
<keyword id="KW-0963">Cytoplasm</keyword>
<keyword id="KW-0227">DNA damage</keyword>
<keyword id="KW-0228">DNA excision</keyword>
<keyword id="KW-0234">DNA repair</keyword>
<keyword id="KW-0267">Excision nuclease</keyword>
<keyword id="KW-0742">SOS response</keyword>
<reference key="1">
    <citation type="submission" date="2007-09" db="EMBL/GenBank/DDBJ databases">
        <title>Complete genome sequence of Rickettsia akari.</title>
        <authorList>
            <person name="Madan A."/>
            <person name="Fahey J."/>
            <person name="Helton E."/>
            <person name="Ketteman M."/>
            <person name="Madan A."/>
            <person name="Rodrigues S."/>
            <person name="Sanchez A."/>
            <person name="Whiting M."/>
            <person name="Dasch G."/>
            <person name="Eremeeva M."/>
        </authorList>
    </citation>
    <scope>NUCLEOTIDE SEQUENCE [LARGE SCALE GENOMIC DNA]</scope>
    <source>
        <strain>Hartford</strain>
    </source>
</reference>
<protein>
    <recommendedName>
        <fullName evidence="1">UvrABC system protein C</fullName>
        <shortName evidence="1">Protein UvrC</shortName>
    </recommendedName>
    <alternativeName>
        <fullName evidence="1">Excinuclease ABC subunit C</fullName>
    </alternativeName>
</protein>
<organism>
    <name type="scientific">Rickettsia akari (strain Hartford)</name>
    <dbReference type="NCBI Taxonomy" id="293614"/>
    <lineage>
        <taxon>Bacteria</taxon>
        <taxon>Pseudomonadati</taxon>
        <taxon>Pseudomonadota</taxon>
        <taxon>Alphaproteobacteria</taxon>
        <taxon>Rickettsiales</taxon>
        <taxon>Rickettsiaceae</taxon>
        <taxon>Rickettsieae</taxon>
        <taxon>Rickettsia</taxon>
        <taxon>spotted fever group</taxon>
    </lineage>
</organism>
<comment type="function">
    <text evidence="1">The UvrABC repair system catalyzes the recognition and processing of DNA lesions. UvrC both incises the 5' and 3' sides of the lesion. The N-terminal half is responsible for the 3' incision and the C-terminal half is responsible for the 5' incision.</text>
</comment>
<comment type="subunit">
    <text evidence="1">Interacts with UvrB in an incision complex.</text>
</comment>
<comment type="subcellular location">
    <subcellularLocation>
        <location evidence="1">Cytoplasm</location>
    </subcellularLocation>
</comment>
<comment type="similarity">
    <text evidence="1">Belongs to the UvrC family.</text>
</comment>
<feature type="chain" id="PRO_1000077825" description="UvrABC system protein C">
    <location>
        <begin position="1"/>
        <end position="651"/>
    </location>
</feature>
<feature type="domain" description="GIY-YIG" evidence="1">
    <location>
        <begin position="20"/>
        <end position="97"/>
    </location>
</feature>
<feature type="domain" description="UVR" evidence="1">
    <location>
        <begin position="207"/>
        <end position="242"/>
    </location>
</feature>
<evidence type="ECO:0000255" key="1">
    <source>
        <dbReference type="HAMAP-Rule" id="MF_00203"/>
    </source>
</evidence>
<gene>
    <name evidence="1" type="primary">uvrC</name>
    <name type="ordered locus">A1C_04430</name>
</gene>
<proteinExistence type="inferred from homology"/>
<dbReference type="EMBL" id="CP000847">
    <property type="protein sequence ID" value="ABV75158.1"/>
    <property type="molecule type" value="Genomic_DNA"/>
</dbReference>
<dbReference type="RefSeq" id="WP_012149788.1">
    <property type="nucleotide sequence ID" value="NC_009881.1"/>
</dbReference>
<dbReference type="SMR" id="A8GP33"/>
<dbReference type="STRING" id="293614.A1C_04430"/>
<dbReference type="KEGG" id="rak:A1C_04430"/>
<dbReference type="eggNOG" id="COG0322">
    <property type="taxonomic scope" value="Bacteria"/>
</dbReference>
<dbReference type="HOGENOM" id="CLU_014841_3_0_5"/>
<dbReference type="Proteomes" id="UP000006830">
    <property type="component" value="Chromosome"/>
</dbReference>
<dbReference type="GO" id="GO:0005737">
    <property type="term" value="C:cytoplasm"/>
    <property type="evidence" value="ECO:0007669"/>
    <property type="project" value="UniProtKB-SubCell"/>
</dbReference>
<dbReference type="GO" id="GO:0009380">
    <property type="term" value="C:excinuclease repair complex"/>
    <property type="evidence" value="ECO:0007669"/>
    <property type="project" value="InterPro"/>
</dbReference>
<dbReference type="GO" id="GO:0003677">
    <property type="term" value="F:DNA binding"/>
    <property type="evidence" value="ECO:0007669"/>
    <property type="project" value="UniProtKB-UniRule"/>
</dbReference>
<dbReference type="GO" id="GO:0009381">
    <property type="term" value="F:excinuclease ABC activity"/>
    <property type="evidence" value="ECO:0007669"/>
    <property type="project" value="UniProtKB-UniRule"/>
</dbReference>
<dbReference type="GO" id="GO:0006289">
    <property type="term" value="P:nucleotide-excision repair"/>
    <property type="evidence" value="ECO:0007669"/>
    <property type="project" value="UniProtKB-UniRule"/>
</dbReference>
<dbReference type="GO" id="GO:0009432">
    <property type="term" value="P:SOS response"/>
    <property type="evidence" value="ECO:0007669"/>
    <property type="project" value="UniProtKB-UniRule"/>
</dbReference>
<dbReference type="CDD" id="cd10434">
    <property type="entry name" value="GIY-YIG_UvrC_Cho"/>
    <property type="match status" value="1"/>
</dbReference>
<dbReference type="FunFam" id="3.40.1440.10:FF:000001">
    <property type="entry name" value="UvrABC system protein C"/>
    <property type="match status" value="1"/>
</dbReference>
<dbReference type="Gene3D" id="1.10.150.20">
    <property type="entry name" value="5' to 3' exonuclease, C-terminal subdomain"/>
    <property type="match status" value="1"/>
</dbReference>
<dbReference type="Gene3D" id="3.40.1440.10">
    <property type="entry name" value="GIY-YIG endonuclease"/>
    <property type="match status" value="1"/>
</dbReference>
<dbReference type="Gene3D" id="4.10.860.10">
    <property type="entry name" value="UVR domain"/>
    <property type="match status" value="1"/>
</dbReference>
<dbReference type="Gene3D" id="3.30.420.340">
    <property type="entry name" value="UvrC, RNAse H endonuclease domain"/>
    <property type="match status" value="1"/>
</dbReference>
<dbReference type="HAMAP" id="MF_00203">
    <property type="entry name" value="UvrC"/>
    <property type="match status" value="1"/>
</dbReference>
<dbReference type="InterPro" id="IPR000305">
    <property type="entry name" value="GIY-YIG_endonuc"/>
</dbReference>
<dbReference type="InterPro" id="IPR035901">
    <property type="entry name" value="GIY-YIG_endonuc_sf"/>
</dbReference>
<dbReference type="InterPro" id="IPR047296">
    <property type="entry name" value="GIY-YIG_UvrC_Cho"/>
</dbReference>
<dbReference type="InterPro" id="IPR003583">
    <property type="entry name" value="Hlx-hairpin-Hlx_DNA-bd_motif"/>
</dbReference>
<dbReference type="InterPro" id="IPR010994">
    <property type="entry name" value="RuvA_2-like"/>
</dbReference>
<dbReference type="InterPro" id="IPR001943">
    <property type="entry name" value="UVR_dom"/>
</dbReference>
<dbReference type="InterPro" id="IPR036876">
    <property type="entry name" value="UVR_dom_sf"/>
</dbReference>
<dbReference type="InterPro" id="IPR050066">
    <property type="entry name" value="UvrABC_protein_C"/>
</dbReference>
<dbReference type="InterPro" id="IPR004791">
    <property type="entry name" value="UvrC"/>
</dbReference>
<dbReference type="InterPro" id="IPR001162">
    <property type="entry name" value="UvrC_RNase_H_dom"/>
</dbReference>
<dbReference type="InterPro" id="IPR038476">
    <property type="entry name" value="UvrC_RNase_H_dom_sf"/>
</dbReference>
<dbReference type="NCBIfam" id="TIGR00194">
    <property type="entry name" value="uvrC"/>
    <property type="match status" value="1"/>
</dbReference>
<dbReference type="PANTHER" id="PTHR30562:SF1">
    <property type="entry name" value="UVRABC SYSTEM PROTEIN C"/>
    <property type="match status" value="1"/>
</dbReference>
<dbReference type="PANTHER" id="PTHR30562">
    <property type="entry name" value="UVRC/OXIDOREDUCTASE"/>
    <property type="match status" value="1"/>
</dbReference>
<dbReference type="Pfam" id="PF01541">
    <property type="entry name" value="GIY-YIG"/>
    <property type="match status" value="1"/>
</dbReference>
<dbReference type="Pfam" id="PF14520">
    <property type="entry name" value="HHH_5"/>
    <property type="match status" value="1"/>
</dbReference>
<dbReference type="Pfam" id="PF02151">
    <property type="entry name" value="UVR"/>
    <property type="match status" value="1"/>
</dbReference>
<dbReference type="Pfam" id="PF22920">
    <property type="entry name" value="UvrC_RNaseH"/>
    <property type="match status" value="1"/>
</dbReference>
<dbReference type="Pfam" id="PF08459">
    <property type="entry name" value="UvrC_RNaseH_dom"/>
    <property type="match status" value="2"/>
</dbReference>
<dbReference type="SMART" id="SM00465">
    <property type="entry name" value="GIYc"/>
    <property type="match status" value="1"/>
</dbReference>
<dbReference type="SMART" id="SM00278">
    <property type="entry name" value="HhH1"/>
    <property type="match status" value="2"/>
</dbReference>
<dbReference type="SUPFAM" id="SSF46600">
    <property type="entry name" value="C-terminal UvrC-binding domain of UvrB"/>
    <property type="match status" value="1"/>
</dbReference>
<dbReference type="SUPFAM" id="SSF82771">
    <property type="entry name" value="GIY-YIG endonuclease"/>
    <property type="match status" value="1"/>
</dbReference>
<dbReference type="SUPFAM" id="SSF47781">
    <property type="entry name" value="RuvA domain 2-like"/>
    <property type="match status" value="1"/>
</dbReference>
<dbReference type="PROSITE" id="PS50164">
    <property type="entry name" value="GIY_YIG"/>
    <property type="match status" value="1"/>
</dbReference>
<dbReference type="PROSITE" id="PS50151">
    <property type="entry name" value="UVR"/>
    <property type="match status" value="1"/>
</dbReference>
<dbReference type="PROSITE" id="PS50165">
    <property type="entry name" value="UVRC"/>
    <property type="match status" value="1"/>
</dbReference>
<name>UVRC_RICAH</name>
<sequence>MTLEITRSELIKSKLIDAPERCGVYRMFDVNKQVIYVGKAKNLKKRLTHYIKSDLDNKTLRMIANTCFLEYSITNSEVEALLLEAQLIKKFQPKFNILLKDDKSFPFIKLRLDHDFPQLLKYRGKTLNDGKCFGPFASATEVNTTLTELQKIFKLRSCTDNYFNSRTRPCMQYEIKRCYAPCVGKINKEDYRDLVAQVKDFLQGRTKALQENLSKKMEELSSQMRFEEAAEIRDRIKALSYVQLKSCVSDIVKDADIIVVVEKNGHYCVEVFLYRAWQACGNIPYFPTSTENSTKEEVLEYFLLQFYQKQQVPAEIIINHEINDKENMIEAIKKINNITKLNIIIPISGGKAKLVQNAAIKALFSLEQYLKKFVKNQEIMLEIKALFGLHEIPERIEIYDNSHIQGKFAVGVVVVVGKAGFDKKEYRVFSLSSCDASLSSHAYPFSPRNLIAGSSTLTNPMDPVVRSREDDTSSTHNYAVGDDYEMLRQVLIRRLTRLKNEPHKLPSLMIIDGGKGHLGIVKEVMDKFAMHIPFVCMSKGVDRNAGIEQFHMTGKEVFTLDTNLPIMKYLQILRDEAHNFAIKNHRLGRSRAIKISSLDNIEGVGETRKKALLHYFGSYKAVCDATIDELTKVNGINKSLAAMIFRTLHKR</sequence>